<sequence length="336" mass="38554">MQPAERSRVPRIDPYGFERPEDFDDAAYEKFFSSYLVTLTRRAIKWSRLLQGGGVPRSRTVKRYVRKGVPLEHRARVWMVLSGAQAQMDQNPGYYHQLLQGERNPRLEDAIRTDLNRTFPDNVKFRKTTDPCLQRTLYNVLLAYGHHNQGVGYCQGMNFIAGYLILITNNEEESFWLLDALVGRILPDYYSPAMLGLKTDQEVLGELVRAKLPAVGALMERLGVLWTLLVSRWFICLFVDILPVETVLRIWDCLFNEGSKIIFRVALTLIKQHQELILEATSVPDICDKFKQITKGSFVMECHTFMQKIFSEPGSLSMATVAKLRESCRARLLAQG</sequence>
<gene>
    <name type="primary">GRTP1</name>
    <name type="synonym">TBC1D6</name>
</gene>
<accession>Q5TC63</accession>
<accession>B9A6K2</accession>
<accession>Q2M232</accession>
<accession>Q5TC64</accession>
<accession>Q66K26</accession>
<accession>Q6P659</accession>
<accession>Q8N528</accession>
<accession>Q9H695</accession>
<protein>
    <recommendedName>
        <fullName>Growth hormone-regulated TBC protein 1</fullName>
    </recommendedName>
    <alternativeName>
        <fullName>TBC1 domain family member 6</fullName>
    </alternativeName>
</protein>
<name>GRTP1_HUMAN</name>
<organism>
    <name type="scientific">Homo sapiens</name>
    <name type="common">Human</name>
    <dbReference type="NCBI Taxonomy" id="9606"/>
    <lineage>
        <taxon>Eukaryota</taxon>
        <taxon>Metazoa</taxon>
        <taxon>Chordata</taxon>
        <taxon>Craniata</taxon>
        <taxon>Vertebrata</taxon>
        <taxon>Euteleostomi</taxon>
        <taxon>Mammalia</taxon>
        <taxon>Eutheria</taxon>
        <taxon>Euarchontoglires</taxon>
        <taxon>Primates</taxon>
        <taxon>Haplorrhini</taxon>
        <taxon>Catarrhini</taxon>
        <taxon>Hominidae</taxon>
        <taxon>Homo</taxon>
    </lineage>
</organism>
<feature type="chain" id="PRO_0000288708" description="Growth hormone-regulated TBC protein 1">
    <location>
        <begin position="1"/>
        <end position="336"/>
    </location>
</feature>
<feature type="domain" description="Rab-GAP TBC" evidence="1">
    <location>
        <begin position="68"/>
        <end position="258"/>
    </location>
</feature>
<feature type="splice variant" id="VSP_025754" description="In isoform 2." evidence="2 3">
    <location>
        <begin position="1"/>
        <end position="78"/>
    </location>
</feature>
<feature type="splice variant" id="VSP_025755" description="In isoform 2 and isoform 3." evidence="2 3 4">
    <original>KIFSEPGSLSMATVAKLRESCRARLLAQG</original>
    <variation>VCGAARGSVPSQGAPPHLQPGGCSDHPEGAQDGHQWA</variation>
    <location>
        <begin position="308"/>
        <end position="336"/>
    </location>
</feature>
<feature type="sequence conflict" description="In Ref. 4; AAH33071." evidence="5" ref="4">
    <original>S</original>
    <variation>T</variation>
    <location>
        <position position="282"/>
    </location>
</feature>
<dbReference type="EMBL" id="AB449887">
    <property type="protein sequence ID" value="BAH16630.1"/>
    <property type="molecule type" value="mRNA"/>
</dbReference>
<dbReference type="EMBL" id="AL136221">
    <property type="status" value="NOT_ANNOTATED_CDS"/>
    <property type="molecule type" value="Genomic_DNA"/>
</dbReference>
<dbReference type="EMBL" id="CH471085">
    <property type="protein sequence ID" value="EAX09205.1"/>
    <property type="molecule type" value="Genomic_DNA"/>
</dbReference>
<dbReference type="EMBL" id="BC033071">
    <property type="protein sequence ID" value="AAH33071.2"/>
    <property type="molecule type" value="mRNA"/>
</dbReference>
<dbReference type="EMBL" id="BC062461">
    <property type="protein sequence ID" value="AAH62461.1"/>
    <property type="molecule type" value="mRNA"/>
</dbReference>
<dbReference type="EMBL" id="BC080640">
    <property type="protein sequence ID" value="AAH80640.1"/>
    <property type="status" value="ALT_INIT"/>
    <property type="molecule type" value="mRNA"/>
</dbReference>
<dbReference type="EMBL" id="BC112123">
    <property type="protein sequence ID" value="AAI12124.1"/>
    <property type="status" value="ALT_INIT"/>
    <property type="molecule type" value="mRNA"/>
</dbReference>
<dbReference type="EMBL" id="BC112125">
    <property type="protein sequence ID" value="AAI12126.1"/>
    <property type="status" value="ALT_INIT"/>
    <property type="molecule type" value="mRNA"/>
</dbReference>
<dbReference type="EMBL" id="AK026127">
    <property type="protein sequence ID" value="BAB15368.1"/>
    <property type="molecule type" value="mRNA"/>
</dbReference>
<dbReference type="CCDS" id="CCDS66591.1">
    <molecule id="Q5TC63-3"/>
</dbReference>
<dbReference type="CCDS" id="CCDS91839.1">
    <molecule id="Q5TC63-2"/>
</dbReference>
<dbReference type="CCDS" id="CCDS9534.2">
    <molecule id="Q5TC63-1"/>
</dbReference>
<dbReference type="RefSeq" id="NP_001273661.1">
    <molecule id="Q5TC63-3"/>
    <property type="nucleotide sequence ID" value="NM_001286732.2"/>
</dbReference>
<dbReference type="RefSeq" id="NP_001273662.1">
    <property type="nucleotide sequence ID" value="NM_001286733.1"/>
</dbReference>
<dbReference type="RefSeq" id="NP_001397958.1">
    <molecule id="Q5TC63-2"/>
    <property type="nucleotide sequence ID" value="NM_001411029.1"/>
</dbReference>
<dbReference type="RefSeq" id="NP_078995.2">
    <molecule id="Q5TC63-1"/>
    <property type="nucleotide sequence ID" value="NM_024719.4"/>
</dbReference>
<dbReference type="RefSeq" id="XP_016876244.1">
    <property type="nucleotide sequence ID" value="XM_017020755.1"/>
</dbReference>
<dbReference type="SMR" id="Q5TC63"/>
<dbReference type="BioGRID" id="122876">
    <property type="interactions" value="13"/>
</dbReference>
<dbReference type="FunCoup" id="Q5TC63">
    <property type="interactions" value="123"/>
</dbReference>
<dbReference type="IntAct" id="Q5TC63">
    <property type="interactions" value="9"/>
</dbReference>
<dbReference type="STRING" id="9606.ENSP00000364579"/>
<dbReference type="iPTMnet" id="Q5TC63"/>
<dbReference type="PhosphoSitePlus" id="Q5TC63"/>
<dbReference type="BioMuta" id="GRTP1"/>
<dbReference type="DMDM" id="206729933"/>
<dbReference type="jPOST" id="Q5TC63"/>
<dbReference type="MassIVE" id="Q5TC63"/>
<dbReference type="PaxDb" id="9606-ENSP00000364579"/>
<dbReference type="PeptideAtlas" id="Q5TC63"/>
<dbReference type="ProteomicsDB" id="64938">
    <molecule id="Q5TC63-1"/>
</dbReference>
<dbReference type="ProteomicsDB" id="64939">
    <molecule id="Q5TC63-2"/>
</dbReference>
<dbReference type="ProteomicsDB" id="7516"/>
<dbReference type="TopDownProteomics" id="Q5TC63-2">
    <molecule id="Q5TC63-2"/>
</dbReference>
<dbReference type="Antibodypedia" id="25922">
    <property type="antibodies" value="116 antibodies from 25 providers"/>
</dbReference>
<dbReference type="DNASU" id="79774"/>
<dbReference type="Ensembl" id="ENST00000326039.3">
    <molecule id="Q5TC63-2"/>
    <property type="protein sequence ID" value="ENSP00000321850.3"/>
    <property type="gene ID" value="ENSG00000139835.14"/>
</dbReference>
<dbReference type="Ensembl" id="ENST00000375430.8">
    <molecule id="Q5TC63-3"/>
    <property type="protein sequence ID" value="ENSP00000364579.4"/>
    <property type="gene ID" value="ENSG00000139835.14"/>
</dbReference>
<dbReference type="Ensembl" id="ENST00000375431.9">
    <molecule id="Q5TC63-1"/>
    <property type="protein sequence ID" value="ENSP00000364580.3"/>
    <property type="gene ID" value="ENSG00000139835.14"/>
</dbReference>
<dbReference type="GeneID" id="79774"/>
<dbReference type="KEGG" id="hsa:79774"/>
<dbReference type="MANE-Select" id="ENST00000375431.9">
    <property type="protein sequence ID" value="ENSP00000364580.3"/>
    <property type="RefSeq nucleotide sequence ID" value="NM_024719.4"/>
    <property type="RefSeq protein sequence ID" value="NP_078995.2"/>
</dbReference>
<dbReference type="UCSC" id="uc001vtn.5">
    <molecule id="Q5TC63-1"/>
    <property type="organism name" value="human"/>
</dbReference>
<dbReference type="AGR" id="HGNC:20310"/>
<dbReference type="CTD" id="79774"/>
<dbReference type="DisGeNET" id="79774"/>
<dbReference type="GeneCards" id="GRTP1"/>
<dbReference type="HGNC" id="HGNC:20310">
    <property type="gene designation" value="GRTP1"/>
</dbReference>
<dbReference type="HPA" id="ENSG00000139835">
    <property type="expression patterns" value="Tissue enhanced (liver)"/>
</dbReference>
<dbReference type="MIM" id="620890">
    <property type="type" value="gene"/>
</dbReference>
<dbReference type="neXtProt" id="NX_Q5TC63"/>
<dbReference type="OpenTargets" id="ENSG00000139835"/>
<dbReference type="PharmGKB" id="PA134908043"/>
<dbReference type="VEuPathDB" id="HostDB:ENSG00000139835"/>
<dbReference type="eggNOG" id="KOG2058">
    <property type="taxonomic scope" value="Eukaryota"/>
</dbReference>
<dbReference type="GeneTree" id="ENSGT00940000154927"/>
<dbReference type="HOGENOM" id="CLU_005350_1_0_1"/>
<dbReference type="InParanoid" id="Q5TC63"/>
<dbReference type="OMA" id="DTMIQDS"/>
<dbReference type="OrthoDB" id="294251at2759"/>
<dbReference type="PAN-GO" id="Q5TC63">
    <property type="GO annotations" value="2 GO annotations based on evolutionary models"/>
</dbReference>
<dbReference type="PhylomeDB" id="Q5TC63"/>
<dbReference type="TreeFam" id="TF105771"/>
<dbReference type="PathwayCommons" id="Q5TC63"/>
<dbReference type="SignaLink" id="Q5TC63"/>
<dbReference type="BioGRID-ORCS" id="79774">
    <property type="hits" value="13 hits in 1156 CRISPR screens"/>
</dbReference>
<dbReference type="ChiTaRS" id="GRTP1">
    <property type="organism name" value="human"/>
</dbReference>
<dbReference type="GenomeRNAi" id="79774"/>
<dbReference type="Pharos" id="Q5TC63">
    <property type="development level" value="Tdark"/>
</dbReference>
<dbReference type="PRO" id="PR:Q5TC63"/>
<dbReference type="Proteomes" id="UP000005640">
    <property type="component" value="Chromosome 13"/>
</dbReference>
<dbReference type="RNAct" id="Q5TC63">
    <property type="molecule type" value="protein"/>
</dbReference>
<dbReference type="Bgee" id="ENSG00000139835">
    <property type="expression patterns" value="Expressed in oocyte and 148 other cell types or tissues"/>
</dbReference>
<dbReference type="ExpressionAtlas" id="Q5TC63">
    <property type="expression patterns" value="baseline and differential"/>
</dbReference>
<dbReference type="GO" id="GO:0005737">
    <property type="term" value="C:cytoplasm"/>
    <property type="evidence" value="ECO:0000318"/>
    <property type="project" value="GO_Central"/>
</dbReference>
<dbReference type="GO" id="GO:0005886">
    <property type="term" value="C:plasma membrane"/>
    <property type="evidence" value="ECO:0000318"/>
    <property type="project" value="GO_Central"/>
</dbReference>
<dbReference type="GO" id="GO:0005096">
    <property type="term" value="F:GTPase activator activity"/>
    <property type="evidence" value="ECO:0000318"/>
    <property type="project" value="GO_Central"/>
</dbReference>
<dbReference type="FunFam" id="1.10.8.270:FF:000027">
    <property type="entry name" value="Growth hormone regulated TBC protein 1"/>
    <property type="match status" value="1"/>
</dbReference>
<dbReference type="FunFam" id="1.10.472.80:FF:000029">
    <property type="entry name" value="Growth hormone-regulated TBC protein 1"/>
    <property type="match status" value="1"/>
</dbReference>
<dbReference type="Gene3D" id="1.10.8.270">
    <property type="entry name" value="putative rabgap domain of human tbc1 domain family member 14 like domains"/>
    <property type="match status" value="1"/>
</dbReference>
<dbReference type="Gene3D" id="1.10.10.750">
    <property type="entry name" value="Ypt/Rab-GAP domain of gyp1p, domain 1"/>
    <property type="match status" value="1"/>
</dbReference>
<dbReference type="Gene3D" id="1.10.472.80">
    <property type="entry name" value="Ypt/Rab-GAP domain of gyp1p, domain 3"/>
    <property type="match status" value="1"/>
</dbReference>
<dbReference type="InterPro" id="IPR000195">
    <property type="entry name" value="Rab-GAP-TBC_dom"/>
</dbReference>
<dbReference type="InterPro" id="IPR035969">
    <property type="entry name" value="Rab-GAP_TBC_sf"/>
</dbReference>
<dbReference type="InterPro" id="IPR050302">
    <property type="entry name" value="Rab_GAP_TBC_domain"/>
</dbReference>
<dbReference type="PANTHER" id="PTHR47219:SF10">
    <property type="entry name" value="GROWTH HORMONE-REGULATED TBC PROTEIN 1"/>
    <property type="match status" value="1"/>
</dbReference>
<dbReference type="PANTHER" id="PTHR47219">
    <property type="entry name" value="RAB GTPASE-ACTIVATING PROTEIN 1-LIKE"/>
    <property type="match status" value="1"/>
</dbReference>
<dbReference type="Pfam" id="PF00566">
    <property type="entry name" value="RabGAP-TBC"/>
    <property type="match status" value="1"/>
</dbReference>
<dbReference type="SMART" id="SM00164">
    <property type="entry name" value="TBC"/>
    <property type="match status" value="1"/>
</dbReference>
<dbReference type="SUPFAM" id="SSF47923">
    <property type="entry name" value="Ypt/Rab-GAP domain of gyp1p"/>
    <property type="match status" value="2"/>
</dbReference>
<dbReference type="PROSITE" id="PS50086">
    <property type="entry name" value="TBC_RABGAP"/>
    <property type="match status" value="1"/>
</dbReference>
<evidence type="ECO:0000255" key="1">
    <source>
        <dbReference type="PROSITE-ProRule" id="PRU00163"/>
    </source>
</evidence>
<evidence type="ECO:0000303" key="2">
    <source>
    </source>
</evidence>
<evidence type="ECO:0000303" key="3">
    <source>
    </source>
</evidence>
<evidence type="ECO:0000303" key="4">
    <source>
    </source>
</evidence>
<evidence type="ECO:0000305" key="5"/>
<proteinExistence type="evidence at protein level"/>
<keyword id="KW-0025">Alternative splicing</keyword>
<keyword id="KW-0903">Direct protein sequencing</keyword>
<keyword id="KW-0343">GTPase activation</keyword>
<keyword id="KW-1267">Proteomics identification</keyword>
<keyword id="KW-1185">Reference proteome</keyword>
<reference key="1">
    <citation type="journal article" date="2009" name="Genes Cells">
        <title>Identification and characterization of a novel Tre-2/Bub2/Cdc16 (TBC) protein that possesses Rab3A-GAP activity.</title>
        <authorList>
            <person name="Ishibashi K."/>
            <person name="Kanno E."/>
            <person name="Itoh T."/>
            <person name="Fukuda M."/>
        </authorList>
    </citation>
    <scope>NUCLEOTIDE SEQUENCE [MRNA] (ISOFORM 3)</scope>
    <source>
        <tissue>Brain</tissue>
    </source>
</reference>
<reference key="2">
    <citation type="journal article" date="2004" name="Nature">
        <title>The DNA sequence and analysis of human chromosome 13.</title>
        <authorList>
            <person name="Dunham A."/>
            <person name="Matthews L.H."/>
            <person name="Burton J."/>
            <person name="Ashurst J.L."/>
            <person name="Howe K.L."/>
            <person name="Ashcroft K.J."/>
            <person name="Beare D.M."/>
            <person name="Burford D.C."/>
            <person name="Hunt S.E."/>
            <person name="Griffiths-Jones S."/>
            <person name="Jones M.C."/>
            <person name="Keenan S.J."/>
            <person name="Oliver K."/>
            <person name="Scott C.E."/>
            <person name="Ainscough R."/>
            <person name="Almeida J.P."/>
            <person name="Ambrose K.D."/>
            <person name="Andrews D.T."/>
            <person name="Ashwell R.I.S."/>
            <person name="Babbage A.K."/>
            <person name="Bagguley C.L."/>
            <person name="Bailey J."/>
            <person name="Bannerjee R."/>
            <person name="Barlow K.F."/>
            <person name="Bates K."/>
            <person name="Beasley H."/>
            <person name="Bird C.P."/>
            <person name="Bray-Allen S."/>
            <person name="Brown A.J."/>
            <person name="Brown J.Y."/>
            <person name="Burrill W."/>
            <person name="Carder C."/>
            <person name="Carter N.P."/>
            <person name="Chapman J.C."/>
            <person name="Clamp M.E."/>
            <person name="Clark S.Y."/>
            <person name="Clarke G."/>
            <person name="Clee C.M."/>
            <person name="Clegg S.C."/>
            <person name="Cobley V."/>
            <person name="Collins J.E."/>
            <person name="Corby N."/>
            <person name="Coville G.J."/>
            <person name="Deloukas P."/>
            <person name="Dhami P."/>
            <person name="Dunham I."/>
            <person name="Dunn M."/>
            <person name="Earthrowl M.E."/>
            <person name="Ellington A.G."/>
            <person name="Faulkner L."/>
            <person name="Frankish A.G."/>
            <person name="Frankland J."/>
            <person name="French L."/>
            <person name="Garner P."/>
            <person name="Garnett J."/>
            <person name="Gilbert J.G.R."/>
            <person name="Gilson C.J."/>
            <person name="Ghori J."/>
            <person name="Grafham D.V."/>
            <person name="Gribble S.M."/>
            <person name="Griffiths C."/>
            <person name="Hall R.E."/>
            <person name="Hammond S."/>
            <person name="Harley J.L."/>
            <person name="Hart E.A."/>
            <person name="Heath P.D."/>
            <person name="Howden P.J."/>
            <person name="Huckle E.J."/>
            <person name="Hunt P.J."/>
            <person name="Hunt A.R."/>
            <person name="Johnson C."/>
            <person name="Johnson D."/>
            <person name="Kay M."/>
            <person name="Kimberley A.M."/>
            <person name="King A."/>
            <person name="Laird G.K."/>
            <person name="Langford C.J."/>
            <person name="Lawlor S."/>
            <person name="Leongamornlert D.A."/>
            <person name="Lloyd D.M."/>
            <person name="Lloyd C."/>
            <person name="Loveland J.E."/>
            <person name="Lovell J."/>
            <person name="Martin S."/>
            <person name="Mashreghi-Mohammadi M."/>
            <person name="McLaren S.J."/>
            <person name="McMurray A."/>
            <person name="Milne S."/>
            <person name="Moore M.J.F."/>
            <person name="Nickerson T."/>
            <person name="Palmer S.A."/>
            <person name="Pearce A.V."/>
            <person name="Peck A.I."/>
            <person name="Pelan S."/>
            <person name="Phillimore B."/>
            <person name="Porter K.M."/>
            <person name="Rice C.M."/>
            <person name="Searle S."/>
            <person name="Sehra H.K."/>
            <person name="Shownkeen R."/>
            <person name="Skuce C.D."/>
            <person name="Smith M."/>
            <person name="Steward C.A."/>
            <person name="Sycamore N."/>
            <person name="Tester J."/>
            <person name="Thomas D.W."/>
            <person name="Tracey A."/>
            <person name="Tromans A."/>
            <person name="Tubby B."/>
            <person name="Wall M."/>
            <person name="Wallis J.M."/>
            <person name="West A.P."/>
            <person name="Whitehead S.L."/>
            <person name="Willey D.L."/>
            <person name="Wilming L."/>
            <person name="Wray P.W."/>
            <person name="Wright M.W."/>
            <person name="Young L."/>
            <person name="Coulson A."/>
            <person name="Durbin R.M."/>
            <person name="Hubbard T."/>
            <person name="Sulston J.E."/>
            <person name="Beck S."/>
            <person name="Bentley D.R."/>
            <person name="Rogers J."/>
            <person name="Ross M.T."/>
        </authorList>
    </citation>
    <scope>NUCLEOTIDE SEQUENCE [LARGE SCALE GENOMIC DNA]</scope>
</reference>
<reference key="3">
    <citation type="submission" date="2005-07" db="EMBL/GenBank/DDBJ databases">
        <authorList>
            <person name="Mural R.J."/>
            <person name="Istrail S."/>
            <person name="Sutton G."/>
            <person name="Florea L."/>
            <person name="Halpern A.L."/>
            <person name="Mobarry C.M."/>
            <person name="Lippert R."/>
            <person name="Walenz B."/>
            <person name="Shatkay H."/>
            <person name="Dew I."/>
            <person name="Miller J.R."/>
            <person name="Flanigan M.J."/>
            <person name="Edwards N.J."/>
            <person name="Bolanos R."/>
            <person name="Fasulo D."/>
            <person name="Halldorsson B.V."/>
            <person name="Hannenhalli S."/>
            <person name="Turner R."/>
            <person name="Yooseph S."/>
            <person name="Lu F."/>
            <person name="Nusskern D.R."/>
            <person name="Shue B.C."/>
            <person name="Zheng X.H."/>
            <person name="Zhong F."/>
            <person name="Delcher A.L."/>
            <person name="Huson D.H."/>
            <person name="Kravitz S.A."/>
            <person name="Mouchard L."/>
            <person name="Reinert K."/>
            <person name="Remington K.A."/>
            <person name="Clark A.G."/>
            <person name="Waterman M.S."/>
            <person name="Eichler E.E."/>
            <person name="Adams M.D."/>
            <person name="Hunkapiller M.W."/>
            <person name="Myers E.W."/>
            <person name="Venter J.C."/>
        </authorList>
    </citation>
    <scope>NUCLEOTIDE SEQUENCE [LARGE SCALE GENOMIC DNA]</scope>
</reference>
<reference key="4">
    <citation type="journal article" date="2004" name="Genome Res.">
        <title>The status, quality, and expansion of the NIH full-length cDNA project: the Mammalian Gene Collection (MGC).</title>
        <authorList>
            <consortium name="The MGC Project Team"/>
        </authorList>
    </citation>
    <scope>NUCLEOTIDE SEQUENCE [LARGE SCALE MRNA] (ISOFORMS 1 AND 2)</scope>
    <source>
        <tissue>Brain</tissue>
        <tissue>Ovary</tissue>
        <tissue>Pancreas</tissue>
        <tissue>Uterus</tissue>
    </source>
</reference>
<reference key="5">
    <citation type="submission" date="2008-03" db="UniProtKB">
        <authorList>
            <person name="Bienvenut W.V."/>
            <person name="Calvo F."/>
            <person name="Kolch W."/>
        </authorList>
    </citation>
    <scope>PROTEIN SEQUENCE OF 49-57 AND 199-209</scope>
    <scope>IDENTIFICATION BY MASS SPECTROMETRY</scope>
    <source>
        <tissue>Cervix carcinoma</tissue>
    </source>
</reference>
<reference key="6">
    <citation type="journal article" date="2004" name="Nat. Genet.">
        <title>Complete sequencing and characterization of 21,243 full-length human cDNAs.</title>
        <authorList>
            <person name="Ota T."/>
            <person name="Suzuki Y."/>
            <person name="Nishikawa T."/>
            <person name="Otsuki T."/>
            <person name="Sugiyama T."/>
            <person name="Irie R."/>
            <person name="Wakamatsu A."/>
            <person name="Hayashi K."/>
            <person name="Sato H."/>
            <person name="Nagai K."/>
            <person name="Kimura K."/>
            <person name="Makita H."/>
            <person name="Sekine M."/>
            <person name="Obayashi M."/>
            <person name="Nishi T."/>
            <person name="Shibahara T."/>
            <person name="Tanaka T."/>
            <person name="Ishii S."/>
            <person name="Yamamoto J."/>
            <person name="Saito K."/>
            <person name="Kawai Y."/>
            <person name="Isono Y."/>
            <person name="Nakamura Y."/>
            <person name="Nagahari K."/>
            <person name="Murakami K."/>
            <person name="Yasuda T."/>
            <person name="Iwayanagi T."/>
            <person name="Wagatsuma M."/>
            <person name="Shiratori A."/>
            <person name="Sudo H."/>
            <person name="Hosoiri T."/>
            <person name="Kaku Y."/>
            <person name="Kodaira H."/>
            <person name="Kondo H."/>
            <person name="Sugawara M."/>
            <person name="Takahashi M."/>
            <person name="Kanda K."/>
            <person name="Yokoi T."/>
            <person name="Furuya T."/>
            <person name="Kikkawa E."/>
            <person name="Omura Y."/>
            <person name="Abe K."/>
            <person name="Kamihara K."/>
            <person name="Katsuta N."/>
            <person name="Sato K."/>
            <person name="Tanikawa M."/>
            <person name="Yamazaki M."/>
            <person name="Ninomiya K."/>
            <person name="Ishibashi T."/>
            <person name="Yamashita H."/>
            <person name="Murakawa K."/>
            <person name="Fujimori K."/>
            <person name="Tanai H."/>
            <person name="Kimata M."/>
            <person name="Watanabe M."/>
            <person name="Hiraoka S."/>
            <person name="Chiba Y."/>
            <person name="Ishida S."/>
            <person name="Ono Y."/>
            <person name="Takiguchi S."/>
            <person name="Watanabe S."/>
            <person name="Yosida M."/>
            <person name="Hotuta T."/>
            <person name="Kusano J."/>
            <person name="Kanehori K."/>
            <person name="Takahashi-Fujii A."/>
            <person name="Hara H."/>
            <person name="Tanase T.-O."/>
            <person name="Nomura Y."/>
            <person name="Togiya S."/>
            <person name="Komai F."/>
            <person name="Hara R."/>
            <person name="Takeuchi K."/>
            <person name="Arita M."/>
            <person name="Imose N."/>
            <person name="Musashino K."/>
            <person name="Yuuki H."/>
            <person name="Oshima A."/>
            <person name="Sasaki N."/>
            <person name="Aotsuka S."/>
            <person name="Yoshikawa Y."/>
            <person name="Matsunawa H."/>
            <person name="Ichihara T."/>
            <person name="Shiohata N."/>
            <person name="Sano S."/>
            <person name="Moriya S."/>
            <person name="Momiyama H."/>
            <person name="Satoh N."/>
            <person name="Takami S."/>
            <person name="Terashima Y."/>
            <person name="Suzuki O."/>
            <person name="Nakagawa S."/>
            <person name="Senoh A."/>
            <person name="Mizoguchi H."/>
            <person name="Goto Y."/>
            <person name="Shimizu F."/>
            <person name="Wakebe H."/>
            <person name="Hishigaki H."/>
            <person name="Watanabe T."/>
            <person name="Sugiyama A."/>
            <person name="Takemoto M."/>
            <person name="Kawakami B."/>
            <person name="Yamazaki M."/>
            <person name="Watanabe K."/>
            <person name="Kumagai A."/>
            <person name="Itakura S."/>
            <person name="Fukuzumi Y."/>
            <person name="Fujimori Y."/>
            <person name="Komiyama M."/>
            <person name="Tashiro H."/>
            <person name="Tanigami A."/>
            <person name="Fujiwara T."/>
            <person name="Ono T."/>
            <person name="Yamada K."/>
            <person name="Fujii Y."/>
            <person name="Ozaki K."/>
            <person name="Hirao M."/>
            <person name="Ohmori Y."/>
            <person name="Kawabata A."/>
            <person name="Hikiji T."/>
            <person name="Kobatake N."/>
            <person name="Inagaki H."/>
            <person name="Ikema Y."/>
            <person name="Okamoto S."/>
            <person name="Okitani R."/>
            <person name="Kawakami T."/>
            <person name="Noguchi S."/>
            <person name="Itoh T."/>
            <person name="Shigeta K."/>
            <person name="Senba T."/>
            <person name="Matsumura K."/>
            <person name="Nakajima Y."/>
            <person name="Mizuno T."/>
            <person name="Morinaga M."/>
            <person name="Sasaki M."/>
            <person name="Togashi T."/>
            <person name="Oyama M."/>
            <person name="Hata H."/>
            <person name="Watanabe M."/>
            <person name="Komatsu T."/>
            <person name="Mizushima-Sugano J."/>
            <person name="Satoh T."/>
            <person name="Shirai Y."/>
            <person name="Takahashi Y."/>
            <person name="Nakagawa K."/>
            <person name="Okumura K."/>
            <person name="Nagase T."/>
            <person name="Nomura N."/>
            <person name="Kikuchi H."/>
            <person name="Masuho Y."/>
            <person name="Yamashita R."/>
            <person name="Nakai K."/>
            <person name="Yada T."/>
            <person name="Nakamura Y."/>
            <person name="Ohara O."/>
            <person name="Isogai T."/>
            <person name="Sugano S."/>
        </authorList>
    </citation>
    <scope>NUCLEOTIDE SEQUENCE [LARGE SCALE MRNA] OF 88-336 (ISOFORM 2)</scope>
    <source>
        <tissue>Kidney epithelium</tissue>
    </source>
</reference>
<comment type="function">
    <text>May act as a GTPase-activating protein for Rab family protein(s).</text>
</comment>
<comment type="alternative products">
    <event type="alternative splicing"/>
    <isoform>
        <id>Q5TC63-1</id>
        <name>1</name>
        <sequence type="displayed"/>
    </isoform>
    <isoform>
        <id>Q5TC63-2</id>
        <name>2</name>
        <sequence type="described" ref="VSP_025754 VSP_025755"/>
    </isoform>
    <isoform>
        <id>Q5TC63-3</id>
        <name>3</name>
        <sequence type="described" ref="VSP_025755"/>
    </isoform>
</comment>
<comment type="sequence caution" evidence="5">
    <conflict type="erroneous initiation">
        <sequence resource="EMBL-CDS" id="AAH80640"/>
    </conflict>
</comment>
<comment type="sequence caution" evidence="5">
    <conflict type="erroneous initiation">
        <sequence resource="EMBL-CDS" id="AAI12124"/>
    </conflict>
</comment>
<comment type="sequence caution" evidence="5">
    <conflict type="erroneous initiation">
        <sequence resource="EMBL-CDS" id="AAI12126"/>
    </conflict>
</comment>